<comment type="function">
    <text evidence="2 10 11 12 13">Key regulator of the Wnt signaling pathway, which is required for various processes during development, such as dorsal patterning, determination of left/right symmetry or myelination in the central nervous system (PubMed:22227309, PubMed:24091014, PubMed:25754822). Acts downstream of Wnt ligands and upstream of beta-catenin (CTNNB1) (PubMed:22227309, PubMed:25754822). Required for canonical Wnt signaling pathway during patterning in the dorsal spinal cord by promoting the aggregation of Disheveled (Dvl) complexes, thereby clustering and formation of Wnt receptor signalosomes and potentiating Wnt activity (PubMed:22227309). During dorsal patterning of the spinal cord, inhibits oligodendrocytes differentiation via interaction with PIP5K1A (PubMed:25754822). Also regulates non-canonical Wnt signaling pathway (PubMed:24091014). Acts downstream of PITX2 in the developing gut and is required for left/right asymmetry within dorsal mesentery: affects mesenchymal condensation by lengthening cadherin-based junctions through WNT5A and non-canonical Wnt signaling, inducing polarized condensation in the left dorsal mesentery necessary to initiate gut rotation (PubMed:24091014). Together with DAAM1, required for myocardial maturation and sarcomere assembly (PubMed:26526197). Is a regulator of actin nucleation and elongation, filopodia formation and podocyte migration (By similarity).</text>
</comment>
<comment type="subunit">
    <text evidence="2 10">Interacts with DVL3. Interacts with INF2 (By similarity).</text>
</comment>
<comment type="alternative products">
    <event type="alternative splicing"/>
    <isoform>
        <id>Q80U19-1</id>
        <name>1</name>
        <sequence type="displayed"/>
    </isoform>
    <isoform>
        <id>Q80U19-2</id>
        <name>2</name>
        <sequence type="described" ref="VSP_008005 VSP_008006"/>
    </isoform>
</comment>
<comment type="tissue specificity">
    <text evidence="8 9">In early embryogenesis, expression is confined to embryonic ectoderm. Highly dynamic expression in later stages of gastrulation. In early somite stages, detected in posterior node and persists until 9-10 somites have developed when expression is concentrated in the chordoneural hinge. During organogenesis, expressed in the CNS, PNS, liver primordia, limb buds and genital tubercle.</text>
</comment>
<comment type="developmental stage">
    <text evidence="13">Expressed in the embryonic myocardium: not expressed in the myocardium at 9.5 dpc but is present in epicardial cells. At 10.5 dpc, expressed in the mesenchyme surrounding the ventral foregut and in regions enriched in cardiac progenitors, as well as the epicardium and lining of the pericardial cavity. By 12.5 dpc, expressed throughout the myocardium and ventricular trabeculae.</text>
</comment>
<comment type="domain">
    <text evidence="1">The DAD domain regulates activation via by an autoinhibitory interaction with the GBD/FH3 domain. This autoinhibition is released upon competitive binding of an activated GTPase. The release of DAD allows the FH2 domain to then nucleate and elongate nonbranched actin filaments (By similarity).</text>
</comment>
<comment type="disruption phenotype">
    <text evidence="13">Conditional knockout mice lacking Daam2 in myocardial cells do not show any heart defects. Conditional knockout mice lacking Daam1 and Daam2 in myocardial cells show cardiomyopathy, which is stronger than with a single Daam1 deletion.</text>
</comment>
<comment type="similarity">
    <text evidence="17">Belongs to the formin homology family.</text>
</comment>
<comment type="sequence caution" evidence="17">
    <conflict type="erroneous initiation">
        <sequence resource="EMBL-CDS" id="BAC65548"/>
    </conflict>
    <text>Extended N-terminus.</text>
</comment>
<comment type="sequence caution" evidence="17">
    <conflict type="miscellaneous discrepancy">
        <sequence resource="EMBL-CDS" id="BAC65548"/>
    </conflict>
    <text>Partially unspliced pre-RNA.</text>
</comment>
<reference key="1">
    <citation type="journal article" date="2004" name="Gene Expr. Patterns">
        <title>Identification and comparative expression analyses of Daam genes in mouse and Xenopus.</title>
        <authorList>
            <person name="Nakaya M.-A."/>
            <person name="Habas R."/>
            <person name="Biris K."/>
            <person name="Dunty W.C. Jr."/>
            <person name="Kato Y."/>
            <person name="He X."/>
            <person name="Yamaguchi T.P."/>
        </authorList>
    </citation>
    <scope>NUCLEOTIDE SEQUENCE [MRNA] (ISOFORM 1)</scope>
    <scope>TISSUE SPECIFICITY</scope>
</reference>
<reference key="2">
    <citation type="journal article" date="2003" name="DNA Res.">
        <title>Prediction of the coding sequences of mouse homologues of KIAA gene: II. The complete nucleotide sequences of 400 mouse KIAA-homologous cDNAs identified by screening of terminal sequences of cDNA clones randomly sampled from size-fractionated libraries.</title>
        <authorList>
            <person name="Okazaki N."/>
            <person name="Kikuno R."/>
            <person name="Ohara R."/>
            <person name="Inamoto S."/>
            <person name="Aizawa H."/>
            <person name="Yuasa S."/>
            <person name="Nakajima D."/>
            <person name="Nagase T."/>
            <person name="Ohara O."/>
            <person name="Koga H."/>
        </authorList>
    </citation>
    <scope>NUCLEOTIDE SEQUENCE [LARGE SCALE MRNA] (ISOFORM 1)</scope>
    <source>
        <tissue>Brain</tissue>
    </source>
</reference>
<reference key="3">
    <citation type="journal article" date="2009" name="PLoS Biol.">
        <title>Lineage-specific biology revealed by a finished genome assembly of the mouse.</title>
        <authorList>
            <person name="Church D.M."/>
            <person name="Goodstadt L."/>
            <person name="Hillier L.W."/>
            <person name="Zody M.C."/>
            <person name="Goldstein S."/>
            <person name="She X."/>
            <person name="Bult C.J."/>
            <person name="Agarwala R."/>
            <person name="Cherry J.L."/>
            <person name="DiCuccio M."/>
            <person name="Hlavina W."/>
            <person name="Kapustin Y."/>
            <person name="Meric P."/>
            <person name="Maglott D."/>
            <person name="Birtle Z."/>
            <person name="Marques A.C."/>
            <person name="Graves T."/>
            <person name="Zhou S."/>
            <person name="Teague B."/>
            <person name="Potamousis K."/>
            <person name="Churas C."/>
            <person name="Place M."/>
            <person name="Herschleb J."/>
            <person name="Runnheim R."/>
            <person name="Forrest D."/>
            <person name="Amos-Landgraf J."/>
            <person name="Schwartz D.C."/>
            <person name="Cheng Z."/>
            <person name="Lindblad-Toh K."/>
            <person name="Eichler E.E."/>
            <person name="Ponting C.P."/>
        </authorList>
    </citation>
    <scope>NUCLEOTIDE SEQUENCE [LARGE SCALE GENOMIC DNA]</scope>
    <source>
        <strain>C57BL/6J</strain>
    </source>
</reference>
<reference key="4">
    <citation type="journal article" date="2004" name="Genome Res.">
        <title>The status, quality, and expansion of the NIH full-length cDNA project: the Mammalian Gene Collection (MGC).</title>
        <authorList>
            <consortium name="The MGC Project Team"/>
        </authorList>
    </citation>
    <scope>NUCLEOTIDE SEQUENCE [LARGE SCALE MRNA] (ISOFORM 2)</scope>
    <source>
        <tissue>Pancreas</tissue>
    </source>
</reference>
<reference key="5">
    <citation type="journal article" date="2004" name="Brain Res. Dev. Brain Res.">
        <title>Identification of chick and mouse Daam1 and Daam2 genes and their expression patterns in the central nervous system.</title>
        <authorList>
            <person name="Kida Y."/>
            <person name="Shiraishi T."/>
            <person name="Ogura T."/>
        </authorList>
    </citation>
    <scope>TISSUE SPECIFICITY</scope>
</reference>
<reference key="6">
    <citation type="journal article" date="2010" name="Cell">
        <title>A tissue-specific atlas of mouse protein phosphorylation and expression.</title>
        <authorList>
            <person name="Huttlin E.L."/>
            <person name="Jedrychowski M.P."/>
            <person name="Elias J.E."/>
            <person name="Goswami T."/>
            <person name="Rad R."/>
            <person name="Beausoleil S.A."/>
            <person name="Villen J."/>
            <person name="Haas W."/>
            <person name="Sowa M.E."/>
            <person name="Gygi S.P."/>
        </authorList>
    </citation>
    <scope>IDENTIFICATION BY MASS SPECTROMETRY [LARGE SCALE ANALYSIS]</scope>
    <source>
        <tissue>Brain</tissue>
        <tissue>Heart</tissue>
        <tissue>Kidney</tissue>
        <tissue>Lung</tissue>
        <tissue>Spleen</tissue>
        <tissue>Testis</tissue>
    </source>
</reference>
<reference key="7">
    <citation type="journal article" date="2012" name="Dev. Cell">
        <title>Daam2 is required for dorsal patterning via modulation of canonical Wnt signaling in the developing spinal cord.</title>
        <authorList>
            <person name="Lee H.K."/>
            <person name="Deneen B."/>
        </authorList>
    </citation>
    <scope>FUNCTION</scope>
    <scope>INTERACTION WITH DVL3</scope>
</reference>
<reference key="8">
    <citation type="journal article" date="2013" name="Dev. Cell">
        <title>Integration of left-right Pitx2 transcription and Wnt signaling drives asymmetric gut morphogenesis via Daam2.</title>
        <authorList>
            <person name="Welsh I.C."/>
            <person name="Thomsen M."/>
            <person name="Gludish D.W."/>
            <person name="Alfonso-Parra C."/>
            <person name="Bai Y."/>
            <person name="Martin J.F."/>
            <person name="Kurpios N.A."/>
        </authorList>
    </citation>
    <scope>FUNCTION</scope>
</reference>
<reference key="9">
    <citation type="journal article" date="2015" name="Dev. Biol.">
        <title>DAAM1 and DAAM2 are co-required for myocardial maturation and sarcomere assembly.</title>
        <authorList>
            <person name="Ajima R."/>
            <person name="Bisson J.A."/>
            <person name="Helt J.C."/>
            <person name="Nakaya M.A."/>
            <person name="Habas R."/>
            <person name="Tessarollo L."/>
            <person name="He X."/>
            <person name="Morrisey E.E."/>
            <person name="Yamaguchi T.P."/>
            <person name="Cohen E.D."/>
        </authorList>
    </citation>
    <scope>FUNCTION</scope>
    <scope>DEVELOPMENTAL STAGE</scope>
    <scope>DISRUPTION PHENOTYPE</scope>
</reference>
<reference key="10">
    <citation type="journal article" date="2015" name="Neuron">
        <title>Daam2-PIP5K is a regulatory pathway for Wnt signaling and therapeutic target for remyelination in the CNS.</title>
        <authorList>
            <person name="Lee H.K."/>
            <person name="Chaboub L.S."/>
            <person name="Zhu W."/>
            <person name="Zollinger D."/>
            <person name="Rasband M.N."/>
            <person name="Fancy S.P."/>
            <person name="Deneen B."/>
        </authorList>
    </citation>
    <scope>FUNCTION</scope>
</reference>
<sequence length="1115" mass="128370">MALRKRSPHGLGFLCCFGGSDLPEIDLRDSHPLQYLEFSGPIPNPEELNVRFAELVDELDLTDKNREAVFALPPEKKWQIYCSKRKEQEDPNKLATSWPEYYIDRINAMAAMQNLYETEDEETDKRNQVVEDLKTALRTQPMRFVTRFIDLEGLTCLLNFLRGMDHTTCESRIHTSLIGCIKALMNNSQGRAHVLAQPEAISIIAQSLRTENSKTKVAVLEILGAVCLVPGGHKKVLQAMLHYQAYAAERTRFQTLLNELDRSLGRYRDEVNLKTAIMSFINAVLNAGAGEDNLEFRLHLRYEFLMLGIQPVIDKLRQHENAILDKHLDFFEMVRNEDDLELARRFDMVHIDTKSASQMFELIHKKLKHTEAYPCLLSVLHHCLQMPYKRNGGYFQQWQLLDRILQQIVLQDERGVDPDLAPLENFNVKNIVNMLINENEVKQWRDQAEKFRKEHMELMSRLERKERECETKTLEKEEMMRTLNKMKDKLARESQELRQARGQVAELVARHNESSTGPVSSPPPPGGPLTLSSSRTTNDLPPPPPPLPFDSCPPPPAPPLPPGGPPIPPGAPPCFSSGPPPSHDPFSSNEAPLRKKRIPQPSHPLKSFNWVKLNEERVSGTVWNEIDDSQVFRILDLEDFEKMFSAYQRHQACMQEGPQRERGNVRDGGAASRPLPAVEASAHRTEKASRSMVSATGAKKELGSTEDIYITSRKVKELSVIDGRRAQNCIILLSKLKLSNDEIRQAILRMDEQEDLAKDMLEQLLKFIPEKSDIDLLEEHKHEIERMARADRFLYEMSRIDHYQQRLQALFFKKKFQERLAEAKPKVEAILLASRELTLSQRLKQMLEVVLAIGNFMNKGQRGGAYGFRVASLNKIADTKSSIDRNISLLHYLIMILEKHFPDILNMPSELKHLSEAAKVNLAELEKEVSILRRGLRAVEVELEYQRHQARDPNDKFVPVMSDFITVSSFSFSELEDQLNEARDKFAKALTHFGEQESKMQPDEFFGIFDTFLQAFLEARQDLEAMRRRKEEDERRARMEFMLKEQREKERWQRQRKVLAGGALEESGEFDDLVSALRSGEVFDKDLSKFKRNRKRPGSQVPEVTRERAINRLNY</sequence>
<feature type="chain" id="PRO_0000194910" description="Disheveled-associated activator of morphogenesis 2">
    <location>
        <begin position="1"/>
        <end position="1115"/>
    </location>
</feature>
<feature type="domain" description="GBD/FH3" evidence="5">
    <location>
        <begin position="40"/>
        <end position="416"/>
    </location>
</feature>
<feature type="domain" description="FH1">
    <location>
        <begin position="518"/>
        <end position="694"/>
    </location>
</feature>
<feature type="domain" description="FH2" evidence="6">
    <location>
        <begin position="595"/>
        <end position="1042"/>
    </location>
</feature>
<feature type="domain" description="DAD" evidence="4">
    <location>
        <begin position="1065"/>
        <end position="1095"/>
    </location>
</feature>
<feature type="region of interest" description="Disordered" evidence="7">
    <location>
        <begin position="510"/>
        <end position="605"/>
    </location>
</feature>
<feature type="region of interest" description="Disordered" evidence="7">
    <location>
        <begin position="655"/>
        <end position="697"/>
    </location>
</feature>
<feature type="coiled-coil region" evidence="3">
    <location>
        <begin position="434"/>
        <end position="515"/>
    </location>
</feature>
<feature type="compositionally biased region" description="Pro residues" evidence="7">
    <location>
        <begin position="540"/>
        <end position="583"/>
    </location>
</feature>
<feature type="splice variant" id="VSP_008005" description="In isoform 2." evidence="15">
    <original>TGPVSSPPP</original>
    <variation>VRGHHPHPI</variation>
    <location>
        <begin position="516"/>
        <end position="524"/>
    </location>
</feature>
<feature type="splice variant" id="VSP_008006" description="In isoform 2." evidence="15">
    <location>
        <begin position="525"/>
        <end position="1115"/>
    </location>
</feature>
<feature type="sequence conflict" description="In Ref. 1; AAR05119." evidence="17" ref="1">
    <original>G</original>
    <variation>R</variation>
    <location>
        <position position="994"/>
    </location>
</feature>
<feature type="sequence conflict" description="In Ref. 1; AAR05119." evidence="17" ref="1">
    <original>E</original>
    <variation>D</variation>
    <location>
        <position position="997"/>
    </location>
</feature>
<gene>
    <name evidence="16 18" type="primary">Daam2</name>
    <name evidence="14" type="synonym">Kiaa0381</name>
</gene>
<keyword id="KW-0025">Alternative splicing</keyword>
<keyword id="KW-0175">Coiled coil</keyword>
<keyword id="KW-1185">Reference proteome</keyword>
<keyword id="KW-0879">Wnt signaling pathway</keyword>
<accession>Q80U19</accession>
<accession>E9QNU9</accession>
<accession>Q6TAB7</accession>
<accession>Q810J5</accession>
<evidence type="ECO:0000250" key="1">
    <source>
        <dbReference type="UniProtKB" id="O08808"/>
    </source>
</evidence>
<evidence type="ECO:0000250" key="2">
    <source>
        <dbReference type="UniProtKB" id="Q86T65"/>
    </source>
</evidence>
<evidence type="ECO:0000255" key="3"/>
<evidence type="ECO:0000255" key="4">
    <source>
        <dbReference type="PROSITE-ProRule" id="PRU00577"/>
    </source>
</evidence>
<evidence type="ECO:0000255" key="5">
    <source>
        <dbReference type="PROSITE-ProRule" id="PRU00579"/>
    </source>
</evidence>
<evidence type="ECO:0000255" key="6">
    <source>
        <dbReference type="PROSITE-ProRule" id="PRU00774"/>
    </source>
</evidence>
<evidence type="ECO:0000256" key="7">
    <source>
        <dbReference type="SAM" id="MobiDB-lite"/>
    </source>
</evidence>
<evidence type="ECO:0000269" key="8">
    <source>
    </source>
</evidence>
<evidence type="ECO:0000269" key="9">
    <source>
    </source>
</evidence>
<evidence type="ECO:0000269" key="10">
    <source>
    </source>
</evidence>
<evidence type="ECO:0000269" key="11">
    <source>
    </source>
</evidence>
<evidence type="ECO:0000269" key="12">
    <source>
    </source>
</evidence>
<evidence type="ECO:0000269" key="13">
    <source>
    </source>
</evidence>
<evidence type="ECO:0000303" key="14">
    <source>
    </source>
</evidence>
<evidence type="ECO:0000303" key="15">
    <source>
    </source>
</evidence>
<evidence type="ECO:0000303" key="16">
    <source>
    </source>
</evidence>
<evidence type="ECO:0000305" key="17"/>
<evidence type="ECO:0000312" key="18">
    <source>
        <dbReference type="MGI" id="MGI:1923691"/>
    </source>
</evidence>
<organism>
    <name type="scientific">Mus musculus</name>
    <name type="common">Mouse</name>
    <dbReference type="NCBI Taxonomy" id="10090"/>
    <lineage>
        <taxon>Eukaryota</taxon>
        <taxon>Metazoa</taxon>
        <taxon>Chordata</taxon>
        <taxon>Craniata</taxon>
        <taxon>Vertebrata</taxon>
        <taxon>Euteleostomi</taxon>
        <taxon>Mammalia</taxon>
        <taxon>Eutheria</taxon>
        <taxon>Euarchontoglires</taxon>
        <taxon>Glires</taxon>
        <taxon>Rodentia</taxon>
        <taxon>Myomorpha</taxon>
        <taxon>Muroidea</taxon>
        <taxon>Muridae</taxon>
        <taxon>Murinae</taxon>
        <taxon>Mus</taxon>
        <taxon>Mus</taxon>
    </lineage>
</organism>
<proteinExistence type="evidence at protein level"/>
<protein>
    <recommendedName>
        <fullName evidence="16">Disheveled-associated activator of morphogenesis 2</fullName>
    </recommendedName>
</protein>
<dbReference type="EMBL" id="AY426536">
    <property type="protein sequence ID" value="AAR05119.1"/>
    <property type="molecule type" value="mRNA"/>
</dbReference>
<dbReference type="EMBL" id="AK122266">
    <property type="protein sequence ID" value="BAC65548.2"/>
    <property type="status" value="ALT_SEQ"/>
    <property type="molecule type" value="Transcribed_RNA"/>
</dbReference>
<dbReference type="EMBL" id="AC124748">
    <property type="status" value="NOT_ANNOTATED_CDS"/>
    <property type="molecule type" value="Genomic_DNA"/>
</dbReference>
<dbReference type="EMBL" id="AC165258">
    <property type="status" value="NOT_ANNOTATED_CDS"/>
    <property type="molecule type" value="Genomic_DNA"/>
</dbReference>
<dbReference type="EMBL" id="BC050043">
    <property type="protein sequence ID" value="AAH50043.1"/>
    <property type="molecule type" value="mRNA"/>
</dbReference>
<dbReference type="CCDS" id="CCDS37648.1">
    <molecule id="Q80U19-1"/>
</dbReference>
<dbReference type="RefSeq" id="NP_001008232.2">
    <molecule id="Q80U19-1"/>
    <property type="nucleotide sequence ID" value="NM_001008231.2"/>
</dbReference>
<dbReference type="SMR" id="Q80U19"/>
<dbReference type="BioGRID" id="218129">
    <property type="interactions" value="10"/>
</dbReference>
<dbReference type="FunCoup" id="Q80U19">
    <property type="interactions" value="319"/>
</dbReference>
<dbReference type="STRING" id="10090.ENSMUSP00000052085"/>
<dbReference type="GlyGen" id="Q80U19">
    <property type="glycosylation" value="3 sites, 2 N-linked glycans (2 sites), 1 O-linked glycan (1 site)"/>
</dbReference>
<dbReference type="iPTMnet" id="Q80U19"/>
<dbReference type="PhosphoSitePlus" id="Q80U19"/>
<dbReference type="SwissPalm" id="Q80U19"/>
<dbReference type="jPOST" id="Q80U19"/>
<dbReference type="PaxDb" id="10090-ENSMUSP00000052085"/>
<dbReference type="PeptideAtlas" id="Q80U19"/>
<dbReference type="ProteomicsDB" id="279262">
    <molecule id="Q80U19-1"/>
</dbReference>
<dbReference type="ProteomicsDB" id="279263">
    <molecule id="Q80U19-2"/>
</dbReference>
<dbReference type="Pumba" id="Q80U19"/>
<dbReference type="Antibodypedia" id="53613">
    <property type="antibodies" value="208 antibodies from 28 providers"/>
</dbReference>
<dbReference type="DNASU" id="76441"/>
<dbReference type="Ensembl" id="ENSMUST00000057610.8">
    <molecule id="Q80U19-1"/>
    <property type="protein sequence ID" value="ENSMUSP00000052085.7"/>
    <property type="gene ID" value="ENSMUSG00000040260.9"/>
</dbReference>
<dbReference type="Ensembl" id="ENSMUST00000224595.2">
    <molecule id="Q80U19-2"/>
    <property type="protein sequence ID" value="ENSMUSP00000153095.2"/>
    <property type="gene ID" value="ENSMUSG00000040260.9"/>
</dbReference>
<dbReference type="GeneID" id="76441"/>
<dbReference type="KEGG" id="mmu:76441"/>
<dbReference type="UCSC" id="uc008cyl.1">
    <molecule id="Q80U19-1"/>
    <property type="organism name" value="mouse"/>
</dbReference>
<dbReference type="UCSC" id="uc008cyn.1">
    <molecule id="Q80U19-2"/>
    <property type="organism name" value="mouse"/>
</dbReference>
<dbReference type="AGR" id="MGI:1923691"/>
<dbReference type="CTD" id="23500"/>
<dbReference type="MGI" id="MGI:1923691">
    <property type="gene designation" value="Daam2"/>
</dbReference>
<dbReference type="VEuPathDB" id="HostDB:ENSMUSG00000040260"/>
<dbReference type="eggNOG" id="KOG1922">
    <property type="taxonomic scope" value="Eukaryota"/>
</dbReference>
<dbReference type="GeneTree" id="ENSGT00940000157801"/>
<dbReference type="HOGENOM" id="CLU_002356_1_0_1"/>
<dbReference type="InParanoid" id="Q80U19"/>
<dbReference type="OMA" id="PCFGMGL"/>
<dbReference type="OrthoDB" id="51826at9989"/>
<dbReference type="PhylomeDB" id="Q80U19"/>
<dbReference type="TreeFam" id="TF314602"/>
<dbReference type="BioGRID-ORCS" id="76441">
    <property type="hits" value="0 hits in 78 CRISPR screens"/>
</dbReference>
<dbReference type="CD-CODE" id="CE726F99">
    <property type="entry name" value="Postsynaptic density"/>
</dbReference>
<dbReference type="ChiTaRS" id="Daam2">
    <property type="organism name" value="mouse"/>
</dbReference>
<dbReference type="PRO" id="PR:Q80U19"/>
<dbReference type="Proteomes" id="UP000000589">
    <property type="component" value="Chromosome 17"/>
</dbReference>
<dbReference type="RNAct" id="Q80U19">
    <property type="molecule type" value="protein"/>
</dbReference>
<dbReference type="Bgee" id="ENSMUSG00000040260">
    <property type="expression patterns" value="Expressed in lumbar subsegment of spinal cord and 265 other cell types or tissues"/>
</dbReference>
<dbReference type="GO" id="GO:0003779">
    <property type="term" value="F:actin binding"/>
    <property type="evidence" value="ECO:0007669"/>
    <property type="project" value="InterPro"/>
</dbReference>
<dbReference type="GO" id="GO:0031267">
    <property type="term" value="F:small GTPase binding"/>
    <property type="evidence" value="ECO:0007669"/>
    <property type="project" value="InterPro"/>
</dbReference>
<dbReference type="GO" id="GO:0030036">
    <property type="term" value="P:actin cytoskeleton organization"/>
    <property type="evidence" value="ECO:0007669"/>
    <property type="project" value="InterPro"/>
</dbReference>
<dbReference type="GO" id="GO:0007368">
    <property type="term" value="P:determination of left/right symmetry"/>
    <property type="evidence" value="ECO:0000315"/>
    <property type="project" value="MGI"/>
</dbReference>
<dbReference type="GO" id="GO:0021516">
    <property type="term" value="P:dorsal spinal cord development"/>
    <property type="evidence" value="ECO:0000315"/>
    <property type="project" value="UniProtKB"/>
</dbReference>
<dbReference type="GO" id="GO:0048715">
    <property type="term" value="P:negative regulation of oligodendrocyte differentiation"/>
    <property type="evidence" value="ECO:0000314"/>
    <property type="project" value="UniProtKB"/>
</dbReference>
<dbReference type="GO" id="GO:0090521">
    <property type="term" value="P:podocyte cell migration"/>
    <property type="evidence" value="ECO:0007669"/>
    <property type="project" value="Ensembl"/>
</dbReference>
<dbReference type="GO" id="GO:0090263">
    <property type="term" value="P:positive regulation of canonical Wnt signaling pathway"/>
    <property type="evidence" value="ECO:0000314"/>
    <property type="project" value="UniProtKB"/>
</dbReference>
<dbReference type="GO" id="GO:0030335">
    <property type="term" value="P:positive regulation of cell migration"/>
    <property type="evidence" value="ECO:0007669"/>
    <property type="project" value="Ensembl"/>
</dbReference>
<dbReference type="GO" id="GO:0030833">
    <property type="term" value="P:regulation of actin filament polymerization"/>
    <property type="evidence" value="ECO:0007669"/>
    <property type="project" value="Ensembl"/>
</dbReference>
<dbReference type="GO" id="GO:0060828">
    <property type="term" value="P:regulation of canonical Wnt signaling pathway"/>
    <property type="evidence" value="ECO:0000314"/>
    <property type="project" value="UniProtKB"/>
</dbReference>
<dbReference type="GO" id="GO:0051489">
    <property type="term" value="P:regulation of filopodium assembly"/>
    <property type="evidence" value="ECO:0007669"/>
    <property type="project" value="Ensembl"/>
</dbReference>
<dbReference type="GO" id="GO:2000050">
    <property type="term" value="P:regulation of non-canonical Wnt signaling pathway"/>
    <property type="evidence" value="ECO:0000314"/>
    <property type="project" value="UniProtKB"/>
</dbReference>
<dbReference type="GO" id="GO:0016055">
    <property type="term" value="P:Wnt signaling pathway"/>
    <property type="evidence" value="ECO:0007669"/>
    <property type="project" value="UniProtKB-KW"/>
</dbReference>
<dbReference type="FunFam" id="1.10.238.150:FF:000001">
    <property type="entry name" value="Dishevelled associated activator of morphogenesis 1"/>
    <property type="match status" value="1"/>
</dbReference>
<dbReference type="FunFam" id="1.20.58.2220:FF:000002">
    <property type="entry name" value="Dishevelled associated activator of morphogenesis 1"/>
    <property type="match status" value="1"/>
</dbReference>
<dbReference type="FunFam" id="1.25.10.10:FF:000012">
    <property type="entry name" value="Dishevelled associated activator of morphogenesis 2"/>
    <property type="match status" value="1"/>
</dbReference>
<dbReference type="Gene3D" id="1.20.58.2220">
    <property type="entry name" value="Formin, FH2 domain"/>
    <property type="match status" value="1"/>
</dbReference>
<dbReference type="Gene3D" id="1.10.238.150">
    <property type="entry name" value="Formin, FH3 diaphanous domain"/>
    <property type="match status" value="1"/>
</dbReference>
<dbReference type="Gene3D" id="1.25.10.10">
    <property type="entry name" value="Leucine-rich Repeat Variant"/>
    <property type="match status" value="1"/>
</dbReference>
<dbReference type="InterPro" id="IPR011989">
    <property type="entry name" value="ARM-like"/>
</dbReference>
<dbReference type="InterPro" id="IPR016024">
    <property type="entry name" value="ARM-type_fold"/>
</dbReference>
<dbReference type="InterPro" id="IPR014767">
    <property type="entry name" value="DAD_dom"/>
</dbReference>
<dbReference type="InterPro" id="IPR015425">
    <property type="entry name" value="FH2_Formin"/>
</dbReference>
<dbReference type="InterPro" id="IPR042201">
    <property type="entry name" value="FH2_Formin_sf"/>
</dbReference>
<dbReference type="InterPro" id="IPR010472">
    <property type="entry name" value="FH3_dom"/>
</dbReference>
<dbReference type="InterPro" id="IPR051425">
    <property type="entry name" value="Formin_Homology"/>
</dbReference>
<dbReference type="InterPro" id="IPR014768">
    <property type="entry name" value="GBD/FH3_dom"/>
</dbReference>
<dbReference type="InterPro" id="IPR010473">
    <property type="entry name" value="GTPase-bd"/>
</dbReference>
<dbReference type="PANTHER" id="PTHR45725:SF7">
    <property type="entry name" value="DISHEVELED-ASSOCIATED ACTIVATOR OF MORPHOGENESIS 2"/>
    <property type="match status" value="1"/>
</dbReference>
<dbReference type="PANTHER" id="PTHR45725">
    <property type="entry name" value="FORMIN HOMOLOGY 2 FAMILY MEMBER"/>
    <property type="match status" value="1"/>
</dbReference>
<dbReference type="Pfam" id="PF06367">
    <property type="entry name" value="Drf_FH3"/>
    <property type="match status" value="1"/>
</dbReference>
<dbReference type="Pfam" id="PF06371">
    <property type="entry name" value="Drf_GBD"/>
    <property type="match status" value="1"/>
</dbReference>
<dbReference type="Pfam" id="PF02181">
    <property type="entry name" value="FH2"/>
    <property type="match status" value="1"/>
</dbReference>
<dbReference type="SMART" id="SM01139">
    <property type="entry name" value="Drf_FH3"/>
    <property type="match status" value="1"/>
</dbReference>
<dbReference type="SMART" id="SM01140">
    <property type="entry name" value="Drf_GBD"/>
    <property type="match status" value="1"/>
</dbReference>
<dbReference type="SMART" id="SM00498">
    <property type="entry name" value="FH2"/>
    <property type="match status" value="1"/>
</dbReference>
<dbReference type="SUPFAM" id="SSF48371">
    <property type="entry name" value="ARM repeat"/>
    <property type="match status" value="1"/>
</dbReference>
<dbReference type="SUPFAM" id="SSF101447">
    <property type="entry name" value="Formin homology 2 domain (FH2 domain)"/>
    <property type="match status" value="1"/>
</dbReference>
<dbReference type="PROSITE" id="PS51231">
    <property type="entry name" value="DAD"/>
    <property type="match status" value="1"/>
</dbReference>
<dbReference type="PROSITE" id="PS51444">
    <property type="entry name" value="FH2"/>
    <property type="match status" value="1"/>
</dbReference>
<dbReference type="PROSITE" id="PS51232">
    <property type="entry name" value="GBD_FH3"/>
    <property type="match status" value="1"/>
</dbReference>
<name>DAAM2_MOUSE</name>